<organism>
    <name type="scientific">Medicago sativa</name>
    <name type="common">Alfalfa</name>
    <dbReference type="NCBI Taxonomy" id="3879"/>
    <lineage>
        <taxon>Eukaryota</taxon>
        <taxon>Viridiplantae</taxon>
        <taxon>Streptophyta</taxon>
        <taxon>Embryophyta</taxon>
        <taxon>Tracheophyta</taxon>
        <taxon>Spermatophyta</taxon>
        <taxon>Magnoliopsida</taxon>
        <taxon>eudicotyledons</taxon>
        <taxon>Gunneridae</taxon>
        <taxon>Pentapetalae</taxon>
        <taxon>rosids</taxon>
        <taxon>fabids</taxon>
        <taxon>Fabales</taxon>
        <taxon>Fabaceae</taxon>
        <taxon>Papilionoideae</taxon>
        <taxon>50 kb inversion clade</taxon>
        <taxon>NPAAA clade</taxon>
        <taxon>Hologalegina</taxon>
        <taxon>IRL clade</taxon>
        <taxon>Trifolieae</taxon>
        <taxon>Medicago</taxon>
    </lineage>
</organism>
<gene>
    <name type="primary">CMDH</name>
</gene>
<name>MDHC_MEDSA</name>
<dbReference type="EC" id="1.1.1.37"/>
<dbReference type="EMBL" id="AF020272">
    <property type="protein sequence ID" value="AAB99756.1"/>
    <property type="molecule type" value="mRNA"/>
</dbReference>
<dbReference type="PIR" id="T09291">
    <property type="entry name" value="T09291"/>
</dbReference>
<dbReference type="SMR" id="O48905"/>
<dbReference type="BioCyc" id="MetaCyc:MONOMER-17412"/>
<dbReference type="GO" id="GO:0005737">
    <property type="term" value="C:cytoplasm"/>
    <property type="evidence" value="ECO:0007669"/>
    <property type="project" value="UniProtKB-SubCell"/>
</dbReference>
<dbReference type="GO" id="GO:0030060">
    <property type="term" value="F:L-malate dehydrogenase (NAD+) activity"/>
    <property type="evidence" value="ECO:0007669"/>
    <property type="project" value="UniProtKB-EC"/>
</dbReference>
<dbReference type="GO" id="GO:0006108">
    <property type="term" value="P:malate metabolic process"/>
    <property type="evidence" value="ECO:0007669"/>
    <property type="project" value="InterPro"/>
</dbReference>
<dbReference type="GO" id="GO:0006099">
    <property type="term" value="P:tricarboxylic acid cycle"/>
    <property type="evidence" value="ECO:0007669"/>
    <property type="project" value="UniProtKB-KW"/>
</dbReference>
<dbReference type="CDD" id="cd01336">
    <property type="entry name" value="MDH_cytoplasmic_cytosolic"/>
    <property type="match status" value="1"/>
</dbReference>
<dbReference type="FunFam" id="3.40.50.720:FF:000010">
    <property type="entry name" value="Malate dehydrogenase"/>
    <property type="match status" value="1"/>
</dbReference>
<dbReference type="FunFam" id="3.90.110.10:FF:000002">
    <property type="entry name" value="Malate dehydrogenase"/>
    <property type="match status" value="1"/>
</dbReference>
<dbReference type="Gene3D" id="3.90.110.10">
    <property type="entry name" value="Lactate dehydrogenase/glycoside hydrolase, family 4, C-terminal"/>
    <property type="match status" value="1"/>
</dbReference>
<dbReference type="Gene3D" id="3.40.50.720">
    <property type="entry name" value="NAD(P)-binding Rossmann-like Domain"/>
    <property type="match status" value="1"/>
</dbReference>
<dbReference type="InterPro" id="IPR001557">
    <property type="entry name" value="L-lactate/malate_DH"/>
</dbReference>
<dbReference type="InterPro" id="IPR022383">
    <property type="entry name" value="Lactate/malate_DH_C"/>
</dbReference>
<dbReference type="InterPro" id="IPR001236">
    <property type="entry name" value="Lactate/malate_DH_N"/>
</dbReference>
<dbReference type="InterPro" id="IPR015955">
    <property type="entry name" value="Lactate_DH/Glyco_Ohase_4_C"/>
</dbReference>
<dbReference type="InterPro" id="IPR001252">
    <property type="entry name" value="Malate_DH_AS"/>
</dbReference>
<dbReference type="InterPro" id="IPR011274">
    <property type="entry name" value="Malate_DH_NAD-dep_euk"/>
</dbReference>
<dbReference type="InterPro" id="IPR010945">
    <property type="entry name" value="Malate_DH_type2"/>
</dbReference>
<dbReference type="InterPro" id="IPR036291">
    <property type="entry name" value="NAD(P)-bd_dom_sf"/>
</dbReference>
<dbReference type="NCBIfam" id="TIGR01759">
    <property type="entry name" value="MalateDH-SF1"/>
    <property type="match status" value="1"/>
</dbReference>
<dbReference type="NCBIfam" id="TIGR01758">
    <property type="entry name" value="MDH_euk_cyt"/>
    <property type="match status" value="1"/>
</dbReference>
<dbReference type="NCBIfam" id="NF003916">
    <property type="entry name" value="PRK05442.1"/>
    <property type="match status" value="1"/>
</dbReference>
<dbReference type="PANTHER" id="PTHR23382">
    <property type="entry name" value="MALATE DEHYDROGENASE"/>
    <property type="match status" value="1"/>
</dbReference>
<dbReference type="Pfam" id="PF02866">
    <property type="entry name" value="Ldh_1_C"/>
    <property type="match status" value="1"/>
</dbReference>
<dbReference type="Pfam" id="PF00056">
    <property type="entry name" value="Ldh_1_N"/>
    <property type="match status" value="1"/>
</dbReference>
<dbReference type="PIRSF" id="PIRSF000102">
    <property type="entry name" value="Lac_mal_DH"/>
    <property type="match status" value="1"/>
</dbReference>
<dbReference type="SUPFAM" id="SSF56327">
    <property type="entry name" value="LDH C-terminal domain-like"/>
    <property type="match status" value="1"/>
</dbReference>
<dbReference type="SUPFAM" id="SSF51735">
    <property type="entry name" value="NAD(P)-binding Rossmann-fold domains"/>
    <property type="match status" value="1"/>
</dbReference>
<dbReference type="PROSITE" id="PS00068">
    <property type="entry name" value="MDH"/>
    <property type="match status" value="1"/>
</dbReference>
<accession>O48905</accession>
<comment type="catalytic activity">
    <reaction evidence="4">
        <text>(S)-malate + NAD(+) = oxaloacetate + NADH + H(+)</text>
        <dbReference type="Rhea" id="RHEA:21432"/>
        <dbReference type="ChEBI" id="CHEBI:15378"/>
        <dbReference type="ChEBI" id="CHEBI:15589"/>
        <dbReference type="ChEBI" id="CHEBI:16452"/>
        <dbReference type="ChEBI" id="CHEBI:57540"/>
        <dbReference type="ChEBI" id="CHEBI:57945"/>
        <dbReference type="EC" id="1.1.1.37"/>
    </reaction>
</comment>
<comment type="subunit">
    <text evidence="1">Homodimer.</text>
</comment>
<comment type="subcellular location">
    <subcellularLocation>
        <location evidence="1">Cytoplasm</location>
    </subcellularLocation>
</comment>
<comment type="similarity">
    <text evidence="5">Belongs to the LDH/MDH superfamily. MDH type 2 family.</text>
</comment>
<reference key="1">
    <citation type="journal article" date="1998" name="Plant J.">
        <title>Alfalfa malate dehydrogenase (MDH): molecular cloning and characterization of five different forms reveals a unique nodule-enhanced MDH.</title>
        <authorList>
            <person name="Miller S.S."/>
            <person name="Driscoll B.T."/>
            <person name="Gregerson R.G."/>
            <person name="Gantt J.S."/>
            <person name="Vance C.P."/>
        </authorList>
    </citation>
    <scope>NUCLEOTIDE SEQUENCE [MRNA]</scope>
    <source>
        <strain>cv. Saranac</strain>
        <tissue>Root nodule</tissue>
    </source>
</reference>
<evidence type="ECO:0000250" key="1"/>
<evidence type="ECO:0000250" key="2">
    <source>
        <dbReference type="UniProtKB" id="P11708"/>
    </source>
</evidence>
<evidence type="ECO:0000250" key="3">
    <source>
        <dbReference type="UniProtKB" id="P93819"/>
    </source>
</evidence>
<evidence type="ECO:0000255" key="4">
    <source>
        <dbReference type="PROSITE-ProRule" id="PRU10004"/>
    </source>
</evidence>
<evidence type="ECO:0000305" key="5"/>
<feature type="chain" id="PRO_0000113416" description="Malate dehydrogenase, cytoplasmic">
    <location>
        <begin position="1"/>
        <end position="332"/>
    </location>
</feature>
<feature type="active site" description="Proton acceptor" evidence="2">
    <location>
        <position position="188"/>
    </location>
</feature>
<feature type="binding site" evidence="3">
    <location>
        <begin position="16"/>
        <end position="17"/>
    </location>
    <ligand>
        <name>NAD(+)</name>
        <dbReference type="ChEBI" id="CHEBI:57540"/>
    </ligand>
</feature>
<feature type="binding site" evidence="3">
    <location>
        <position position="43"/>
    </location>
    <ligand>
        <name>NAD(+)</name>
        <dbReference type="ChEBI" id="CHEBI:57540"/>
    </ligand>
</feature>
<feature type="binding site" evidence="3">
    <location>
        <position position="90"/>
    </location>
    <ligand>
        <name>NAD(+)</name>
        <dbReference type="ChEBI" id="CHEBI:57540"/>
    </ligand>
</feature>
<feature type="binding site" evidence="3">
    <location>
        <position position="99"/>
    </location>
    <ligand>
        <name>oxaloacetate</name>
        <dbReference type="ChEBI" id="CHEBI:16452"/>
    </ligand>
</feature>
<feature type="binding site" evidence="3">
    <location>
        <position position="113"/>
    </location>
    <ligand>
        <name>NAD(+)</name>
        <dbReference type="ChEBI" id="CHEBI:57540"/>
    </ligand>
</feature>
<feature type="binding site" evidence="3">
    <location>
        <position position="132"/>
    </location>
    <ligand>
        <name>NAD(+)</name>
        <dbReference type="ChEBI" id="CHEBI:57540"/>
    </ligand>
</feature>
<feature type="binding site" evidence="3">
    <location>
        <position position="132"/>
    </location>
    <ligand>
        <name>oxaloacetate</name>
        <dbReference type="ChEBI" id="CHEBI:16452"/>
    </ligand>
</feature>
<feature type="binding site" evidence="3">
    <location>
        <position position="163"/>
    </location>
    <ligand>
        <name>oxaloacetate</name>
        <dbReference type="ChEBI" id="CHEBI:16452"/>
    </ligand>
</feature>
<feature type="binding site" evidence="3">
    <location>
        <position position="188"/>
    </location>
    <ligand>
        <name>oxaloacetate</name>
        <dbReference type="ChEBI" id="CHEBI:16452"/>
    </ligand>
</feature>
<feature type="binding site" evidence="3">
    <location>
        <position position="243"/>
    </location>
    <ligand>
        <name>oxaloacetate</name>
        <dbReference type="ChEBI" id="CHEBI:16452"/>
    </ligand>
</feature>
<protein>
    <recommendedName>
        <fullName>Malate dehydrogenase, cytoplasmic</fullName>
        <ecNumber>1.1.1.37</ecNumber>
    </recommendedName>
</protein>
<keyword id="KW-0963">Cytoplasm</keyword>
<keyword id="KW-0520">NAD</keyword>
<keyword id="KW-0560">Oxidoreductase</keyword>
<keyword id="KW-0816">Tricarboxylic acid cycle</keyword>
<proteinExistence type="evidence at transcript level"/>
<sequence length="332" mass="35547">MAKDPVRVLVTGAAGQIGYALVPMIARGVMLGPDQPVILHMLDIAPAAESLNGVKMELVDAAFPLLKGVVATTDVVEACTGVNIAVMVGGFPRKEGMERKDVMSKNVSIYKSQASALEKHAAANCKVLVVANPANTNALILKEFAPSIPERNISCLTRLDHNRALGQISERLNVQVSDVKNVIIWGNHSSTQYPDVNHATVNTPAGEKPVRQLVSDDAWLNGEFISTVQQRGAAIIKARKLSSALSAASAACDHIRDWVLGTPQGTFVSMGVYSDGSYNVPSGLIYSFPVTCANGEWKIVQGLSIDEFSRKKLDLTAEELTEEKNLAHSCLS</sequence>